<accession>Q1GLE1</accession>
<keyword id="KW-0963">Cytoplasm</keyword>
<keyword id="KW-0378">Hydrolase</keyword>
<keyword id="KW-0546">Nucleotide metabolism</keyword>
<keyword id="KW-0614">Plasmid</keyword>
<keyword id="KW-1185">Reference proteome</keyword>
<proteinExistence type="inferred from homology"/>
<protein>
    <recommendedName>
        <fullName evidence="1">dTTP/UTP pyrophosphatase</fullName>
        <shortName evidence="1">dTTPase/UTPase</shortName>
        <ecNumber evidence="1">3.6.1.9</ecNumber>
    </recommendedName>
    <alternativeName>
        <fullName evidence="1">Nucleoside triphosphate pyrophosphatase</fullName>
    </alternativeName>
    <alternativeName>
        <fullName evidence="1">Nucleotide pyrophosphatase</fullName>
        <shortName evidence="1">Nucleotide PPase</shortName>
    </alternativeName>
</protein>
<dbReference type="EC" id="3.6.1.9" evidence="1"/>
<dbReference type="EMBL" id="CP000376">
    <property type="protein sequence ID" value="ABF62525.1"/>
    <property type="molecule type" value="Genomic_DNA"/>
</dbReference>
<dbReference type="RefSeq" id="WP_011537165.1">
    <property type="nucleotide sequence ID" value="NC_008043.1"/>
</dbReference>
<dbReference type="SMR" id="Q1GLE1"/>
<dbReference type="KEGG" id="sit:TM1040_3556"/>
<dbReference type="HOGENOM" id="CLU_040416_2_0_5"/>
<dbReference type="OrthoDB" id="9807767at2"/>
<dbReference type="Proteomes" id="UP000000636">
    <property type="component" value="Plasmid megaplasmid TM1040"/>
</dbReference>
<dbReference type="GO" id="GO:0005737">
    <property type="term" value="C:cytoplasm"/>
    <property type="evidence" value="ECO:0007669"/>
    <property type="project" value="UniProtKB-SubCell"/>
</dbReference>
<dbReference type="GO" id="GO:0036218">
    <property type="term" value="F:dTTP diphosphatase activity"/>
    <property type="evidence" value="ECO:0007669"/>
    <property type="project" value="RHEA"/>
</dbReference>
<dbReference type="GO" id="GO:0036221">
    <property type="term" value="F:UTP diphosphatase activity"/>
    <property type="evidence" value="ECO:0007669"/>
    <property type="project" value="RHEA"/>
</dbReference>
<dbReference type="GO" id="GO:0009117">
    <property type="term" value="P:nucleotide metabolic process"/>
    <property type="evidence" value="ECO:0007669"/>
    <property type="project" value="UniProtKB-KW"/>
</dbReference>
<dbReference type="CDD" id="cd00555">
    <property type="entry name" value="Maf"/>
    <property type="match status" value="1"/>
</dbReference>
<dbReference type="Gene3D" id="3.90.950.10">
    <property type="match status" value="1"/>
</dbReference>
<dbReference type="HAMAP" id="MF_00528">
    <property type="entry name" value="Maf"/>
    <property type="match status" value="1"/>
</dbReference>
<dbReference type="InterPro" id="IPR029001">
    <property type="entry name" value="ITPase-like_fam"/>
</dbReference>
<dbReference type="InterPro" id="IPR003697">
    <property type="entry name" value="Maf-like"/>
</dbReference>
<dbReference type="NCBIfam" id="TIGR00172">
    <property type="entry name" value="maf"/>
    <property type="match status" value="1"/>
</dbReference>
<dbReference type="PANTHER" id="PTHR43213">
    <property type="entry name" value="BIFUNCTIONAL DTTP/UTP PYROPHOSPHATASE/METHYLTRANSFERASE PROTEIN-RELATED"/>
    <property type="match status" value="1"/>
</dbReference>
<dbReference type="PANTHER" id="PTHR43213:SF5">
    <property type="entry name" value="BIFUNCTIONAL DTTP_UTP PYROPHOSPHATASE_METHYLTRANSFERASE PROTEIN-RELATED"/>
    <property type="match status" value="1"/>
</dbReference>
<dbReference type="Pfam" id="PF02545">
    <property type="entry name" value="Maf"/>
    <property type="match status" value="1"/>
</dbReference>
<dbReference type="PIRSF" id="PIRSF006305">
    <property type="entry name" value="Maf"/>
    <property type="match status" value="1"/>
</dbReference>
<dbReference type="SUPFAM" id="SSF52972">
    <property type="entry name" value="ITPase-like"/>
    <property type="match status" value="1"/>
</dbReference>
<feature type="chain" id="PRO_0000267439" description="dTTP/UTP pyrophosphatase">
    <location>
        <begin position="1"/>
        <end position="193"/>
    </location>
</feature>
<feature type="active site" description="Proton acceptor" evidence="1">
    <location>
        <position position="68"/>
    </location>
</feature>
<feature type="site" description="Important for substrate specificity" evidence="1">
    <location>
        <position position="11"/>
    </location>
</feature>
<feature type="site" description="Important for substrate specificity" evidence="1">
    <location>
        <position position="69"/>
    </location>
</feature>
<feature type="site" description="Important for substrate specificity" evidence="1">
    <location>
        <position position="151"/>
    </location>
</feature>
<comment type="function">
    <text evidence="1">Nucleoside triphosphate pyrophosphatase that hydrolyzes dTTP and UTP. May have a dual role in cell division arrest and in preventing the incorporation of modified nucleotides into cellular nucleic acids.</text>
</comment>
<comment type="catalytic activity">
    <reaction evidence="1">
        <text>dTTP + H2O = dTMP + diphosphate + H(+)</text>
        <dbReference type="Rhea" id="RHEA:28534"/>
        <dbReference type="ChEBI" id="CHEBI:15377"/>
        <dbReference type="ChEBI" id="CHEBI:15378"/>
        <dbReference type="ChEBI" id="CHEBI:33019"/>
        <dbReference type="ChEBI" id="CHEBI:37568"/>
        <dbReference type="ChEBI" id="CHEBI:63528"/>
        <dbReference type="EC" id="3.6.1.9"/>
    </reaction>
</comment>
<comment type="catalytic activity">
    <reaction evidence="1">
        <text>UTP + H2O = UMP + diphosphate + H(+)</text>
        <dbReference type="Rhea" id="RHEA:29395"/>
        <dbReference type="ChEBI" id="CHEBI:15377"/>
        <dbReference type="ChEBI" id="CHEBI:15378"/>
        <dbReference type="ChEBI" id="CHEBI:33019"/>
        <dbReference type="ChEBI" id="CHEBI:46398"/>
        <dbReference type="ChEBI" id="CHEBI:57865"/>
        <dbReference type="EC" id="3.6.1.9"/>
    </reaction>
</comment>
<comment type="cofactor">
    <cofactor evidence="1">
        <name>a divalent metal cation</name>
        <dbReference type="ChEBI" id="CHEBI:60240"/>
    </cofactor>
</comment>
<comment type="subcellular location">
    <subcellularLocation>
        <location evidence="1">Cytoplasm</location>
    </subcellularLocation>
</comment>
<comment type="similarity">
    <text evidence="1">Belongs to the Maf family. YhdE subfamily.</text>
</comment>
<reference key="1">
    <citation type="submission" date="2006-05" db="EMBL/GenBank/DDBJ databases">
        <title>Complete sequence of megaplasmid of Silicibacter sp. TM1040.</title>
        <authorList>
            <consortium name="US DOE Joint Genome Institute"/>
            <person name="Copeland A."/>
            <person name="Lucas S."/>
            <person name="Lapidus A."/>
            <person name="Barry K."/>
            <person name="Detter J.C."/>
            <person name="Glavina del Rio T."/>
            <person name="Hammon N."/>
            <person name="Israni S."/>
            <person name="Dalin E."/>
            <person name="Tice H."/>
            <person name="Pitluck S."/>
            <person name="Brettin T."/>
            <person name="Bruce D."/>
            <person name="Han C."/>
            <person name="Tapia R."/>
            <person name="Goodwin L."/>
            <person name="Thompson L.S."/>
            <person name="Gilna P."/>
            <person name="Schmutz J."/>
            <person name="Larimer F."/>
            <person name="Land M."/>
            <person name="Hauser L."/>
            <person name="Kyrpides N."/>
            <person name="Kim E."/>
            <person name="Belas R."/>
            <person name="Moran M.A."/>
            <person name="Buchan A."/>
            <person name="Gonzalez J.M."/>
            <person name="Schell M.A."/>
            <person name="Sun F."/>
            <person name="Richardson P."/>
        </authorList>
    </citation>
    <scope>NUCLEOTIDE SEQUENCE [LARGE SCALE GENOMIC DNA]</scope>
    <source>
        <strain>TM1040</strain>
    </source>
</reference>
<sequence length="193" mass="20932">MAFILGSGSPRRLELLAQLGVTPDDIRPPDIDETPQKGELPRDYCARVTRQKAEAVTSNPEDLVLCADTTVVLGRRIMGKPRDAGEAAEFLLALSGRRHRVITSVALRKQDRLWQKDVVSQVKMKRLSDEELNAYLATGDWEGKAGGYAIQGPAGALIPWISGSFTAIVGLPLAETATLLQTAGYPLYKDTAS</sequence>
<geneLocation type="plasmid">
    <name>megaplasmid TM1040</name>
</geneLocation>
<evidence type="ECO:0000255" key="1">
    <source>
        <dbReference type="HAMAP-Rule" id="MF_00528"/>
    </source>
</evidence>
<name>NTPPA_RUEST</name>
<gene>
    <name type="ordered locus">TM1040_3556</name>
</gene>
<organism>
    <name type="scientific">Ruegeria sp. (strain TM1040)</name>
    <name type="common">Silicibacter sp.</name>
    <dbReference type="NCBI Taxonomy" id="292414"/>
    <lineage>
        <taxon>Bacteria</taxon>
        <taxon>Pseudomonadati</taxon>
        <taxon>Pseudomonadota</taxon>
        <taxon>Alphaproteobacteria</taxon>
        <taxon>Rhodobacterales</taxon>
        <taxon>Roseobacteraceae</taxon>
        <taxon>Ruegeria</taxon>
    </lineage>
</organism>